<feature type="chain" id="PRO_0000427509" description="Uncharacterized protein MT2393">
    <location>
        <begin position="1"/>
        <end position="128"/>
    </location>
</feature>
<gene>
    <name type="ordered locus">MT2393</name>
</gene>
<proteinExistence type="predicted"/>
<name>Y2331_MYCTO</name>
<protein>
    <recommendedName>
        <fullName>Uncharacterized protein MT2393</fullName>
    </recommendedName>
</protein>
<sequence>MPPVFLPQIGRLTPDAVGEAIGIAADDIPMAARWIGSRPCSLIGQPNTMGDEMGYLGPGLAGQRCVDRLVMGASRSTCSRLPVIASVDERLSVLKPVRPRLHSISFIFKGRPGEVYLTVTGYNFRGVP</sequence>
<dbReference type="EMBL" id="AE000516">
    <property type="protein sequence ID" value="AAK46685.1"/>
    <property type="status" value="ALT_INIT"/>
    <property type="molecule type" value="Genomic_DNA"/>
</dbReference>
<dbReference type="PIR" id="D70705">
    <property type="entry name" value="D70705"/>
</dbReference>
<dbReference type="RefSeq" id="WP_003411975.1">
    <property type="nucleotide sequence ID" value="NZ_KK341227.1"/>
</dbReference>
<dbReference type="KEGG" id="mtc:MT2393"/>
<dbReference type="PATRIC" id="fig|83331.31.peg.2579"/>
<dbReference type="HOGENOM" id="CLU_1395014_0_0_11"/>
<dbReference type="Proteomes" id="UP000001020">
    <property type="component" value="Chromosome"/>
</dbReference>
<dbReference type="SUPFAM" id="SSF53706">
    <property type="entry name" value="Formate dehydrogenase/DMSO reductase, domains 1-3"/>
    <property type="match status" value="1"/>
</dbReference>
<comment type="sequence caution" evidence="1">
    <conflict type="erroneous initiation">
        <sequence resource="EMBL-CDS" id="AAK46685"/>
    </conflict>
</comment>
<accession>P9WLB2</accession>
<accession>L0TAW6</accession>
<accession>P0A5G3</accession>
<accession>P71881</accession>
<organism>
    <name type="scientific">Mycobacterium tuberculosis (strain CDC 1551 / Oshkosh)</name>
    <dbReference type="NCBI Taxonomy" id="83331"/>
    <lineage>
        <taxon>Bacteria</taxon>
        <taxon>Bacillati</taxon>
        <taxon>Actinomycetota</taxon>
        <taxon>Actinomycetes</taxon>
        <taxon>Mycobacteriales</taxon>
        <taxon>Mycobacteriaceae</taxon>
        <taxon>Mycobacterium</taxon>
        <taxon>Mycobacterium tuberculosis complex</taxon>
    </lineage>
</organism>
<reference key="1">
    <citation type="journal article" date="2002" name="J. Bacteriol.">
        <title>Whole-genome comparison of Mycobacterium tuberculosis clinical and laboratory strains.</title>
        <authorList>
            <person name="Fleischmann R.D."/>
            <person name="Alland D."/>
            <person name="Eisen J.A."/>
            <person name="Carpenter L."/>
            <person name="White O."/>
            <person name="Peterson J.D."/>
            <person name="DeBoy R.T."/>
            <person name="Dodson R.J."/>
            <person name="Gwinn M.L."/>
            <person name="Haft D.H."/>
            <person name="Hickey E.K."/>
            <person name="Kolonay J.F."/>
            <person name="Nelson W.C."/>
            <person name="Umayam L.A."/>
            <person name="Ermolaeva M.D."/>
            <person name="Salzberg S.L."/>
            <person name="Delcher A."/>
            <person name="Utterback T.R."/>
            <person name="Weidman J.F."/>
            <person name="Khouri H.M."/>
            <person name="Gill J."/>
            <person name="Mikula A."/>
            <person name="Bishai W."/>
            <person name="Jacobs W.R. Jr."/>
            <person name="Venter J.C."/>
            <person name="Fraser C.M."/>
        </authorList>
    </citation>
    <scope>NUCLEOTIDE SEQUENCE [LARGE SCALE GENOMIC DNA]</scope>
    <source>
        <strain>CDC 1551 / Oshkosh</strain>
    </source>
</reference>
<keyword id="KW-1185">Reference proteome</keyword>
<evidence type="ECO:0000305" key="1"/>